<accession>F4JAA5</accession>
<accession>Q9SD77</accession>
<accession>Q9STG8</accession>
<dbReference type="EC" id="3.6.4.13"/>
<dbReference type="EMBL" id="AL096859">
    <property type="protein sequence ID" value="CAB51169.1"/>
    <property type="status" value="ALT_SEQ"/>
    <property type="molecule type" value="Genomic_DNA"/>
</dbReference>
<dbReference type="EMBL" id="AL133292">
    <property type="protein sequence ID" value="CAB61942.1"/>
    <property type="status" value="ALT_SEQ"/>
    <property type="molecule type" value="Genomic_DNA"/>
</dbReference>
<dbReference type="EMBL" id="CP002686">
    <property type="protein sequence ID" value="AEE78224.1"/>
    <property type="molecule type" value="Genomic_DNA"/>
</dbReference>
<dbReference type="PIR" id="T45632">
    <property type="entry name" value="T45632"/>
</dbReference>
<dbReference type="RefSeq" id="NP_190280.5">
    <property type="nucleotide sequence ID" value="NM_114563.7"/>
</dbReference>
<dbReference type="SMR" id="F4JAA5"/>
<dbReference type="FunCoup" id="F4JAA5">
    <property type="interactions" value="4006"/>
</dbReference>
<dbReference type="STRING" id="3702.F4JAA5"/>
<dbReference type="iPTMnet" id="F4JAA5"/>
<dbReference type="PaxDb" id="3702-AT3G46960.1"/>
<dbReference type="ProteomicsDB" id="232656"/>
<dbReference type="EnsemblPlants" id="AT3G46960.1">
    <property type="protein sequence ID" value="AT3G46960.1"/>
    <property type="gene ID" value="AT3G46960"/>
</dbReference>
<dbReference type="GeneID" id="823849"/>
<dbReference type="Gramene" id="AT3G46960.1">
    <property type="protein sequence ID" value="AT3G46960.1"/>
    <property type="gene ID" value="AT3G46960"/>
</dbReference>
<dbReference type="KEGG" id="ath:AT3G46960"/>
<dbReference type="Araport" id="AT3G46960"/>
<dbReference type="TAIR" id="AT3G46960">
    <property type="gene designation" value="SKI2"/>
</dbReference>
<dbReference type="eggNOG" id="KOG0947">
    <property type="taxonomic scope" value="Eukaryota"/>
</dbReference>
<dbReference type="HOGENOM" id="CLU_002902_1_2_1"/>
<dbReference type="InParanoid" id="F4JAA5"/>
<dbReference type="PRO" id="PR:F4JAA5"/>
<dbReference type="Proteomes" id="UP000006548">
    <property type="component" value="Chromosome 3"/>
</dbReference>
<dbReference type="ExpressionAtlas" id="F4JAA5">
    <property type="expression patterns" value="baseline and differential"/>
</dbReference>
<dbReference type="GO" id="GO:0005737">
    <property type="term" value="C:cytoplasm"/>
    <property type="evidence" value="ECO:0000314"/>
    <property type="project" value="UniProtKB"/>
</dbReference>
<dbReference type="GO" id="GO:0000325">
    <property type="term" value="C:plant-type vacuole"/>
    <property type="evidence" value="ECO:0007005"/>
    <property type="project" value="TAIR"/>
</dbReference>
<dbReference type="GO" id="GO:0055087">
    <property type="term" value="C:Ski complex"/>
    <property type="evidence" value="ECO:0000314"/>
    <property type="project" value="UniProtKB"/>
</dbReference>
<dbReference type="GO" id="GO:0005524">
    <property type="term" value="F:ATP binding"/>
    <property type="evidence" value="ECO:0007669"/>
    <property type="project" value="UniProtKB-KW"/>
</dbReference>
<dbReference type="GO" id="GO:0016887">
    <property type="term" value="F:ATP hydrolysis activity"/>
    <property type="evidence" value="ECO:0007669"/>
    <property type="project" value="RHEA"/>
</dbReference>
<dbReference type="GO" id="GO:0003723">
    <property type="term" value="F:RNA binding"/>
    <property type="evidence" value="ECO:0007669"/>
    <property type="project" value="UniProtKB-KW"/>
</dbReference>
<dbReference type="GO" id="GO:0003724">
    <property type="term" value="F:RNA helicase activity"/>
    <property type="evidence" value="ECO:0000315"/>
    <property type="project" value="TAIR"/>
</dbReference>
<dbReference type="GO" id="GO:0070478">
    <property type="term" value="P:nuclear-transcribed mRNA catabolic process, 3'-5' exonucleolytic nonsense-mediated decay"/>
    <property type="evidence" value="ECO:0000315"/>
    <property type="project" value="UniProtKB"/>
</dbReference>
<dbReference type="GO" id="GO:1904278">
    <property type="term" value="P:positive regulation of wax biosynthetic process"/>
    <property type="evidence" value="ECO:0000316"/>
    <property type="project" value="TAIR"/>
</dbReference>
<dbReference type="GO" id="GO:0016441">
    <property type="term" value="P:post-transcriptional gene silencing"/>
    <property type="evidence" value="ECO:0000315"/>
    <property type="project" value="TAIR"/>
</dbReference>
<dbReference type="GO" id="GO:0006813">
    <property type="term" value="P:potassium ion transport"/>
    <property type="evidence" value="ECO:0000315"/>
    <property type="project" value="TAIR"/>
</dbReference>
<dbReference type="GO" id="GO:0035864">
    <property type="term" value="P:response to potassium ion"/>
    <property type="evidence" value="ECO:0000315"/>
    <property type="project" value="TAIR"/>
</dbReference>
<dbReference type="GO" id="GO:0000292">
    <property type="term" value="P:RNA fragment catabolic process"/>
    <property type="evidence" value="ECO:0000315"/>
    <property type="project" value="TAIR"/>
</dbReference>
<dbReference type="CDD" id="cd18795">
    <property type="entry name" value="SF2_C_Ski2"/>
    <property type="match status" value="1"/>
</dbReference>
<dbReference type="FunFam" id="3.40.50.300:FF:000354">
    <property type="entry name" value="ATP-dependent RNA helicase SKI2"/>
    <property type="match status" value="1"/>
</dbReference>
<dbReference type="FunFam" id="1.10.3380.30:FF:000010">
    <property type="entry name" value="DExH-box ATP-dependent RNA helicase DExH11"/>
    <property type="match status" value="1"/>
</dbReference>
<dbReference type="FunFam" id="3.40.50.300:FF:001047">
    <property type="entry name" value="DExH-box ATP-dependent RNA helicase DExH11"/>
    <property type="match status" value="1"/>
</dbReference>
<dbReference type="FunFam" id="1.10.3380.30:FF:000001">
    <property type="entry name" value="Ski2 ATP-dependent RNA helicase"/>
    <property type="match status" value="1"/>
</dbReference>
<dbReference type="Gene3D" id="1.10.3380.30">
    <property type="match status" value="2"/>
</dbReference>
<dbReference type="Gene3D" id="3.40.50.300">
    <property type="entry name" value="P-loop containing nucleotide triphosphate hydrolases"/>
    <property type="match status" value="2"/>
</dbReference>
<dbReference type="InterPro" id="IPR011545">
    <property type="entry name" value="DEAD/DEAH_box_helicase_dom"/>
</dbReference>
<dbReference type="InterPro" id="IPR014001">
    <property type="entry name" value="Helicase_ATP-bd"/>
</dbReference>
<dbReference type="InterPro" id="IPR001650">
    <property type="entry name" value="Helicase_C-like"/>
</dbReference>
<dbReference type="InterPro" id="IPR048392">
    <property type="entry name" value="MTR4-like_stalk"/>
</dbReference>
<dbReference type="InterPro" id="IPR025696">
    <property type="entry name" value="MTR4_beta-barrel"/>
</dbReference>
<dbReference type="InterPro" id="IPR027417">
    <property type="entry name" value="P-loop_NTPase"/>
</dbReference>
<dbReference type="InterPro" id="IPR050699">
    <property type="entry name" value="RNA-DNA_Helicase"/>
</dbReference>
<dbReference type="InterPro" id="IPR016438">
    <property type="entry name" value="SKI2-like"/>
</dbReference>
<dbReference type="InterPro" id="IPR012961">
    <property type="entry name" value="Ski2/MTR4_C"/>
</dbReference>
<dbReference type="InterPro" id="IPR040801">
    <property type="entry name" value="Ski2_N"/>
</dbReference>
<dbReference type="PANTHER" id="PTHR12131">
    <property type="entry name" value="ATP-DEPENDENT RNA AND DNA HELICASE"/>
    <property type="match status" value="1"/>
</dbReference>
<dbReference type="PANTHER" id="PTHR12131:SF24">
    <property type="entry name" value="DEXH-BOX ATP-DEPENDENT RNA HELICASE DEXH11"/>
    <property type="match status" value="1"/>
</dbReference>
<dbReference type="Pfam" id="PF00270">
    <property type="entry name" value="DEAD"/>
    <property type="match status" value="1"/>
</dbReference>
<dbReference type="Pfam" id="PF08148">
    <property type="entry name" value="DSHCT"/>
    <property type="match status" value="1"/>
</dbReference>
<dbReference type="Pfam" id="PF00271">
    <property type="entry name" value="Helicase_C"/>
    <property type="match status" value="1"/>
</dbReference>
<dbReference type="Pfam" id="PF21408">
    <property type="entry name" value="MTR4-like_stalk"/>
    <property type="match status" value="1"/>
</dbReference>
<dbReference type="Pfam" id="PF13234">
    <property type="entry name" value="MTR4_beta-barrel"/>
    <property type="match status" value="1"/>
</dbReference>
<dbReference type="Pfam" id="PF17911">
    <property type="entry name" value="Ski2_N"/>
    <property type="match status" value="1"/>
</dbReference>
<dbReference type="PIRSF" id="PIRSF005198">
    <property type="entry name" value="Antiviral_helicase_SKI2"/>
    <property type="match status" value="1"/>
</dbReference>
<dbReference type="SMART" id="SM00487">
    <property type="entry name" value="DEXDc"/>
    <property type="match status" value="1"/>
</dbReference>
<dbReference type="SMART" id="SM01142">
    <property type="entry name" value="DSHCT"/>
    <property type="match status" value="1"/>
</dbReference>
<dbReference type="SMART" id="SM00490">
    <property type="entry name" value="HELICc"/>
    <property type="match status" value="1"/>
</dbReference>
<dbReference type="SUPFAM" id="SSF52540">
    <property type="entry name" value="P-loop containing nucleoside triphosphate hydrolases"/>
    <property type="match status" value="1"/>
</dbReference>
<dbReference type="PROSITE" id="PS51192">
    <property type="entry name" value="HELICASE_ATP_BIND_1"/>
    <property type="match status" value="1"/>
</dbReference>
<dbReference type="PROSITE" id="PS51194">
    <property type="entry name" value="HELICASE_CTER"/>
    <property type="match status" value="1"/>
</dbReference>
<sequence length="1347" mass="151184">MNKVEAGNELGFRVGFSGHGGHLRVEPFYTAERDDALNSLPDFVSPPAFAKETKESIKKHIEEKYLIPRLEPDQFSAEKAENQWDFDWFSRVKMPLQPSLPRSVVVPTWELPFRRQKEDTENGAWEPKSVEVDLSEQMYGDQDSGFFPRMVGPPKDFLRGSVNNRPFRPGGLEDSQSSERVLPEGVSSGQWVQELLNGGPAQTVPPSFKQSLDLGDLMPYPQTWSVYEDHSSHGNASDENSSKLSIQFDDLFKKAWEEDTFSELEGDDHTAGSESPKAEAEPDAKASISNEVSKGLETDVTVLDEILSSAKTAIMSEEAVTGSSDKQLRKEGWATKGDSQDIADRFYELVPDMAIEFPFELDNFQKEAICCLEKGESVFVAAHTSAGKTVVAEYAFALATKHCTRAVYTAPIKTISNQKYRDFCGKFDVGLLTGDVSIRPEASCLIMTTEILRSMLYRGADIIRDIEWVIFDEVHYVNDVERGVVWEEVIIMLPRHINFVLLSATVPNTFEFADWIGRTKQKEIRVTGTTKRPVPLEHCLFYSGELYKVCENEVFLSKGIKDAKDSQKKKNSNAVSVAPKQQMGSSAHQDGSKSQKHEAHSRGKQNKHSSVKDVGKSSYSGNSQNNGAFRRSAASNWLLLINKLSKMSLLPVVVFCFSKNYCDRCADALTGTDLTSSSEKSEIRVFCDKAFSRLKGSDRNLPQVLRLQSLLHRGIGVHHAGLLPIVKEVVEMLFCRGVIKVLFSTETFAMGVNAPARTVVFDALRKFDGKEFRQLLPGEYTQMAGRAGRRGLDKTGTVVVMCRDEVPDESDLRRVIVGSATRLESQFRLTYIMILHLLRVEELKVEDMLKRSFAEFHAQKKLPEKQQLLMIKRSLPTKHIECIKGEPAIEDYYDMYMEANEYNNKMSEAVMQSPYAQSFLVQGRVVVMKSGMGIDNLLGIVLKGPSNTNRQYVVLVIKSEIPPPEKNMVSIGKKSSDPSQGYFIAPKSKRGFEEEFYTKPSSRKGPVVIKIELPYHGVAAGVGYEVKGFDNKEFLCICDSKIKIDQVRLLEDGNKAAFSQTVQQLLDLKSDGNKFPPALDPVKDLKLKDAELVETYYKWTNLLQKMSMNKCHGCVKLEEHMKLAREIKKHKTDLKDLEFQMSDEALLQMPAFQGRIDVLKNIGCIDDDLVVQIKGRVACEMNSGEELICTVCLFENQFEELEPEEAVAIMSAFVFQQKNTSAPTLTPKLAKAKQRLYDTAIRLGELQAQYNLQIDPEEYAQENLKFGLVEVVYEWAKGTPFAEICELTDVPEGLIVRTIVRLDETCREFKNAAAIMGNSALHKKMDAASNAIKRDIVFAASLYVTGV</sequence>
<comment type="function">
    <text evidence="4 5">Component of the SKI complex which is thought to be involved in exosome-mediated RNA decay and associates with transcriptionally active genes in a manner dependent on PAF1 complex (PAF1C) (PubMed:22511887). Involved in the regulation of potassium deprivation stress response (PubMed:21535471).</text>
</comment>
<comment type="catalytic activity">
    <reaction evidence="8">
        <text>ATP + H2O = ADP + phosphate + H(+)</text>
        <dbReference type="Rhea" id="RHEA:13065"/>
        <dbReference type="ChEBI" id="CHEBI:15377"/>
        <dbReference type="ChEBI" id="CHEBI:15378"/>
        <dbReference type="ChEBI" id="CHEBI:30616"/>
        <dbReference type="ChEBI" id="CHEBI:43474"/>
        <dbReference type="ChEBI" id="CHEBI:456216"/>
        <dbReference type="EC" id="3.6.4.13"/>
    </reaction>
</comment>
<comment type="subunit">
    <text evidence="5">Component of the cytoplasmic SKI complex, which consists of SKI2, SKI3 and VIP3/SKI8.</text>
</comment>
<comment type="subcellular location">
    <subcellularLocation>
        <location evidence="5">Cytoplasm</location>
    </subcellularLocation>
</comment>
<comment type="tissue specificity">
    <text evidence="4">Expressed in vascular tissues of leaves and roots of young plants.</text>
</comment>
<comment type="induction">
    <text evidence="4">Induced by low potassium, zeatin and cold stress. Down-regulated by high potassium treatment.</text>
</comment>
<comment type="disruption phenotype">
    <text evidence="5">Dwarf phenotype.</text>
</comment>
<comment type="similarity">
    <text evidence="8">Belongs to the DExH box helicase family. SKI2 subfamily.</text>
</comment>
<comment type="sequence caution" evidence="8">
    <conflict type="erroneous gene model prediction">
        <sequence resource="EMBL-CDS" id="CAB51169"/>
    </conflict>
</comment>
<comment type="sequence caution" evidence="8">
    <conflict type="erroneous gene model prediction">
        <sequence resource="EMBL-CDS" id="CAB61942"/>
    </conflict>
</comment>
<feature type="chain" id="PRO_0000432767" description="DExH-box ATP-dependent RNA helicase DExH11">
    <location>
        <begin position="1"/>
        <end position="1347"/>
    </location>
</feature>
<feature type="domain" description="Helicase ATP-binding" evidence="1">
    <location>
        <begin position="369"/>
        <end position="524"/>
    </location>
</feature>
<feature type="domain" description="Helicase C-terminal" evidence="2">
    <location>
        <begin position="673"/>
        <end position="838"/>
    </location>
</feature>
<feature type="region of interest" description="Disordered" evidence="3">
    <location>
        <begin position="263"/>
        <end position="291"/>
    </location>
</feature>
<feature type="region of interest" description="Disordered" evidence="3">
    <location>
        <begin position="566"/>
        <end position="625"/>
    </location>
</feature>
<feature type="short sequence motif" description="DEVH box" evidence="8">
    <location>
        <begin position="472"/>
        <end position="475"/>
    </location>
</feature>
<feature type="compositionally biased region" description="Basic and acidic residues" evidence="3">
    <location>
        <begin position="267"/>
        <end position="284"/>
    </location>
</feature>
<feature type="compositionally biased region" description="Basic and acidic residues" evidence="3">
    <location>
        <begin position="590"/>
        <end position="601"/>
    </location>
</feature>
<feature type="binding site" evidence="1">
    <location>
        <begin position="382"/>
        <end position="389"/>
    </location>
    <ligand>
        <name>ATP</name>
        <dbReference type="ChEBI" id="CHEBI:30616"/>
    </ligand>
</feature>
<evidence type="ECO:0000255" key="1">
    <source>
        <dbReference type="PROSITE-ProRule" id="PRU00541"/>
    </source>
</evidence>
<evidence type="ECO:0000255" key="2">
    <source>
        <dbReference type="PROSITE-ProRule" id="PRU00542"/>
    </source>
</evidence>
<evidence type="ECO:0000256" key="3">
    <source>
        <dbReference type="SAM" id="MobiDB-lite"/>
    </source>
</evidence>
<evidence type="ECO:0000269" key="4">
    <source>
    </source>
</evidence>
<evidence type="ECO:0000269" key="5">
    <source>
    </source>
</evidence>
<evidence type="ECO:0000303" key="6">
    <source>
    </source>
</evidence>
<evidence type="ECO:0000303" key="7">
    <source>
    </source>
</evidence>
<evidence type="ECO:0000305" key="8"/>
<evidence type="ECO:0000312" key="9">
    <source>
        <dbReference type="Araport" id="AT3G46960"/>
    </source>
</evidence>
<evidence type="ECO:0000312" key="10">
    <source>
        <dbReference type="EMBL" id="CAB51169.1"/>
    </source>
</evidence>
<evidence type="ECO:0000312" key="11">
    <source>
        <dbReference type="EMBL" id="CAB61942.1"/>
    </source>
</evidence>
<organism>
    <name type="scientific">Arabidopsis thaliana</name>
    <name type="common">Mouse-ear cress</name>
    <dbReference type="NCBI Taxonomy" id="3702"/>
    <lineage>
        <taxon>Eukaryota</taxon>
        <taxon>Viridiplantae</taxon>
        <taxon>Streptophyta</taxon>
        <taxon>Embryophyta</taxon>
        <taxon>Tracheophyta</taxon>
        <taxon>Spermatophyta</taxon>
        <taxon>Magnoliopsida</taxon>
        <taxon>eudicotyledons</taxon>
        <taxon>Gunneridae</taxon>
        <taxon>Pentapetalae</taxon>
        <taxon>rosids</taxon>
        <taxon>malvids</taxon>
        <taxon>Brassicales</taxon>
        <taxon>Brassicaceae</taxon>
        <taxon>Camelineae</taxon>
        <taxon>Arabidopsis</taxon>
    </lineage>
</organism>
<proteinExistence type="evidence at protein level"/>
<keyword id="KW-0067">ATP-binding</keyword>
<keyword id="KW-0963">Cytoplasm</keyword>
<keyword id="KW-0347">Helicase</keyword>
<keyword id="KW-0378">Hydrolase</keyword>
<keyword id="KW-0547">Nucleotide-binding</keyword>
<keyword id="KW-1185">Reference proteome</keyword>
<keyword id="KW-0694">RNA-binding</keyword>
<keyword id="KW-0804">Transcription</keyword>
<keyword id="KW-0805">Transcription regulation</keyword>
<gene>
    <name evidence="7" type="primary">SKI2</name>
    <name evidence="6" type="synonym">HELPS</name>
    <name evidence="9" type="ordered locus">At3g46960</name>
    <name evidence="11" type="ORF">F13I12.10</name>
    <name evidence="10" type="ORF">T6H20.10</name>
</gene>
<name>SKI2_ARATH</name>
<protein>
    <recommendedName>
        <fullName evidence="8">DExH-box ATP-dependent RNA helicase DExH11</fullName>
        <ecNumber>3.6.4.13</ecNumber>
    </recommendedName>
    <alternativeName>
        <fullName evidence="6">AtHELPS</fullName>
    </alternativeName>
    <alternativeName>
        <fullName evidence="7">Protein SKI2 homolog</fullName>
        <shortName evidence="7">AtSKI2</shortName>
    </alternativeName>
</protein>
<reference key="1">
    <citation type="journal article" date="2000" name="Nature">
        <title>Sequence and analysis of chromosome 3 of the plant Arabidopsis thaliana.</title>
        <authorList>
            <person name="Salanoubat M."/>
            <person name="Lemcke K."/>
            <person name="Rieger M."/>
            <person name="Ansorge W."/>
            <person name="Unseld M."/>
            <person name="Fartmann B."/>
            <person name="Valle G."/>
            <person name="Bloecker H."/>
            <person name="Perez-Alonso M."/>
            <person name="Obermaier B."/>
            <person name="Delseny M."/>
            <person name="Boutry M."/>
            <person name="Grivell L.A."/>
            <person name="Mache R."/>
            <person name="Puigdomenech P."/>
            <person name="De Simone V."/>
            <person name="Choisne N."/>
            <person name="Artiguenave F."/>
            <person name="Robert C."/>
            <person name="Brottier P."/>
            <person name="Wincker P."/>
            <person name="Cattolico L."/>
            <person name="Weissenbach J."/>
            <person name="Saurin W."/>
            <person name="Quetier F."/>
            <person name="Schaefer M."/>
            <person name="Mueller-Auer S."/>
            <person name="Gabel C."/>
            <person name="Fuchs M."/>
            <person name="Benes V."/>
            <person name="Wurmbach E."/>
            <person name="Drzonek H."/>
            <person name="Erfle H."/>
            <person name="Jordan N."/>
            <person name="Bangert S."/>
            <person name="Wiedelmann R."/>
            <person name="Kranz H."/>
            <person name="Voss H."/>
            <person name="Holland R."/>
            <person name="Brandt P."/>
            <person name="Nyakatura G."/>
            <person name="Vezzi A."/>
            <person name="D'Angelo M."/>
            <person name="Pallavicini A."/>
            <person name="Toppo S."/>
            <person name="Simionati B."/>
            <person name="Conrad A."/>
            <person name="Hornischer K."/>
            <person name="Kauer G."/>
            <person name="Loehnert T.-H."/>
            <person name="Nordsiek G."/>
            <person name="Reichelt J."/>
            <person name="Scharfe M."/>
            <person name="Schoen O."/>
            <person name="Bargues M."/>
            <person name="Terol J."/>
            <person name="Climent J."/>
            <person name="Navarro P."/>
            <person name="Collado C."/>
            <person name="Perez-Perez A."/>
            <person name="Ottenwaelder B."/>
            <person name="Duchemin D."/>
            <person name="Cooke R."/>
            <person name="Laudie M."/>
            <person name="Berger-Llauro C."/>
            <person name="Purnelle B."/>
            <person name="Masuy D."/>
            <person name="de Haan M."/>
            <person name="Maarse A.C."/>
            <person name="Alcaraz J.-P."/>
            <person name="Cottet A."/>
            <person name="Casacuberta E."/>
            <person name="Monfort A."/>
            <person name="Argiriou A."/>
            <person name="Flores M."/>
            <person name="Liguori R."/>
            <person name="Vitale D."/>
            <person name="Mannhaupt G."/>
            <person name="Haase D."/>
            <person name="Schoof H."/>
            <person name="Rudd S."/>
            <person name="Zaccaria P."/>
            <person name="Mewes H.-W."/>
            <person name="Mayer K.F.X."/>
            <person name="Kaul S."/>
            <person name="Town C.D."/>
            <person name="Koo H.L."/>
            <person name="Tallon L.J."/>
            <person name="Jenkins J."/>
            <person name="Rooney T."/>
            <person name="Rizzo M."/>
            <person name="Walts A."/>
            <person name="Utterback T."/>
            <person name="Fujii C.Y."/>
            <person name="Shea T.P."/>
            <person name="Creasy T.H."/>
            <person name="Haas B."/>
            <person name="Maiti R."/>
            <person name="Wu D."/>
            <person name="Peterson J."/>
            <person name="Van Aken S."/>
            <person name="Pai G."/>
            <person name="Militscher J."/>
            <person name="Sellers P."/>
            <person name="Gill J.E."/>
            <person name="Feldblyum T.V."/>
            <person name="Preuss D."/>
            <person name="Lin X."/>
            <person name="Nierman W.C."/>
            <person name="Salzberg S.L."/>
            <person name="White O."/>
            <person name="Venter J.C."/>
            <person name="Fraser C.M."/>
            <person name="Kaneko T."/>
            <person name="Nakamura Y."/>
            <person name="Sato S."/>
            <person name="Kato T."/>
            <person name="Asamizu E."/>
            <person name="Sasamoto S."/>
            <person name="Kimura T."/>
            <person name="Idesawa K."/>
            <person name="Kawashima K."/>
            <person name="Kishida Y."/>
            <person name="Kiyokawa C."/>
            <person name="Kohara M."/>
            <person name="Matsumoto M."/>
            <person name="Matsuno A."/>
            <person name="Muraki A."/>
            <person name="Nakayama S."/>
            <person name="Nakazaki N."/>
            <person name="Shinpo S."/>
            <person name="Takeuchi C."/>
            <person name="Wada T."/>
            <person name="Watanabe A."/>
            <person name="Yamada M."/>
            <person name="Yasuda M."/>
            <person name="Tabata S."/>
        </authorList>
    </citation>
    <scope>NUCLEOTIDE SEQUENCE [LARGE SCALE GENOMIC DNA]</scope>
    <source>
        <strain>cv. Columbia</strain>
    </source>
</reference>
<reference key="2">
    <citation type="journal article" date="2017" name="Plant J.">
        <title>Araport11: a complete reannotation of the Arabidopsis thaliana reference genome.</title>
        <authorList>
            <person name="Cheng C.Y."/>
            <person name="Krishnakumar V."/>
            <person name="Chan A.P."/>
            <person name="Thibaud-Nissen F."/>
            <person name="Schobel S."/>
            <person name="Town C.D."/>
        </authorList>
    </citation>
    <scope>GENOME REANNOTATION</scope>
    <source>
        <strain>cv. Columbia</strain>
    </source>
</reference>
<reference key="3">
    <citation type="journal article" date="2011" name="FEBS J.">
        <title>A DExD/H box RNA helicase is important for K+ deprivation responses and tolerance in Arabidopsis thaliana.</title>
        <authorList>
            <person name="Xu R.R."/>
            <person name="Qi S.D."/>
            <person name="Lu L.T."/>
            <person name="Chen C.T."/>
            <person name="Wu C.A."/>
            <person name="Zheng C.C."/>
        </authorList>
    </citation>
    <scope>FUNCTION</scope>
    <scope>TISSUE SPECIFICITY</scope>
    <scope>INDUCTION</scope>
</reference>
<reference key="4">
    <citation type="journal article" date="2012" name="PLoS Genet.">
        <title>Context-dependent dual role of SKI8 homologs in mRNA synthesis and turnover.</title>
        <authorList>
            <person name="Dorcey E."/>
            <person name="Rodriguez-Villalon A."/>
            <person name="Salinas P."/>
            <person name="Santuari L."/>
            <person name="Pradervand S."/>
            <person name="Harshman K."/>
            <person name="Hardtke C.S."/>
        </authorList>
    </citation>
    <scope>IDENTIFICATION BY MASS SPECTROMETRY</scope>
    <scope>FUNCTION</scope>
    <scope>SUBCELLULAR LOCATION</scope>
    <scope>DISRUPTION PHENOTYPE</scope>
</reference>
<reference key="5">
    <citation type="journal article" date="2013" name="PLoS ONE">
        <title>Genome-wide comparative in silico analysis of the RNA helicase gene family in Zea mays and Glycine max: a comparison with Arabidopsis and Oryza sativa.</title>
        <authorList>
            <person name="Xu R."/>
            <person name="Zhang S."/>
            <person name="Huang J."/>
            <person name="Zheng C."/>
        </authorList>
    </citation>
    <scope>GENE FAMILY</scope>
</reference>